<proteinExistence type="inferred from homology"/>
<accession>Q73X40</accession>
<organism>
    <name type="scientific">Mycolicibacterium paratuberculosis (strain ATCC BAA-968 / K-10)</name>
    <name type="common">Mycobacterium paratuberculosis</name>
    <dbReference type="NCBI Taxonomy" id="262316"/>
    <lineage>
        <taxon>Bacteria</taxon>
        <taxon>Bacillati</taxon>
        <taxon>Actinomycetota</taxon>
        <taxon>Actinomycetes</taxon>
        <taxon>Mycobacteriales</taxon>
        <taxon>Mycobacteriaceae</taxon>
        <taxon>Mycobacterium</taxon>
        <taxon>Mycobacterium avium complex (MAC)</taxon>
    </lineage>
</organism>
<keyword id="KW-0030">Aminoacyl-tRNA synthetase</keyword>
<keyword id="KW-0067">ATP-binding</keyword>
<keyword id="KW-0963">Cytoplasm</keyword>
<keyword id="KW-0436">Ligase</keyword>
<keyword id="KW-0547">Nucleotide-binding</keyword>
<keyword id="KW-0648">Protein biosynthesis</keyword>
<keyword id="KW-1185">Reference proteome</keyword>
<dbReference type="EC" id="6.1.1.19" evidence="1"/>
<dbReference type="EMBL" id="AE016958">
    <property type="protein sequence ID" value="AAS04787.1"/>
    <property type="molecule type" value="Genomic_DNA"/>
</dbReference>
<dbReference type="RefSeq" id="WP_003877286.1">
    <property type="nucleotide sequence ID" value="NZ_CP106873.1"/>
</dbReference>
<dbReference type="SMR" id="Q73X40"/>
<dbReference type="STRING" id="262316.MAP_2470c"/>
<dbReference type="KEGG" id="mpa:MAP_2470c"/>
<dbReference type="eggNOG" id="COG0018">
    <property type="taxonomic scope" value="Bacteria"/>
</dbReference>
<dbReference type="HOGENOM" id="CLU_006406_0_1_11"/>
<dbReference type="Proteomes" id="UP000000580">
    <property type="component" value="Chromosome"/>
</dbReference>
<dbReference type="GO" id="GO:0005737">
    <property type="term" value="C:cytoplasm"/>
    <property type="evidence" value="ECO:0007669"/>
    <property type="project" value="UniProtKB-SubCell"/>
</dbReference>
<dbReference type="GO" id="GO:0004814">
    <property type="term" value="F:arginine-tRNA ligase activity"/>
    <property type="evidence" value="ECO:0007669"/>
    <property type="project" value="UniProtKB-UniRule"/>
</dbReference>
<dbReference type="GO" id="GO:0005524">
    <property type="term" value="F:ATP binding"/>
    <property type="evidence" value="ECO:0007669"/>
    <property type="project" value="UniProtKB-UniRule"/>
</dbReference>
<dbReference type="GO" id="GO:0006420">
    <property type="term" value="P:arginyl-tRNA aminoacylation"/>
    <property type="evidence" value="ECO:0007669"/>
    <property type="project" value="UniProtKB-UniRule"/>
</dbReference>
<dbReference type="CDD" id="cd07956">
    <property type="entry name" value="Anticodon_Ia_Arg"/>
    <property type="match status" value="1"/>
</dbReference>
<dbReference type="CDD" id="cd00671">
    <property type="entry name" value="ArgRS_core"/>
    <property type="match status" value="1"/>
</dbReference>
<dbReference type="FunFam" id="1.10.730.10:FF:000008">
    <property type="entry name" value="Arginine--tRNA ligase"/>
    <property type="match status" value="1"/>
</dbReference>
<dbReference type="FunFam" id="3.30.1360.70:FF:000003">
    <property type="entry name" value="Arginine--tRNA ligase"/>
    <property type="match status" value="1"/>
</dbReference>
<dbReference type="FunFam" id="3.40.50.620:FF:000062">
    <property type="entry name" value="Arginine--tRNA ligase"/>
    <property type="match status" value="1"/>
</dbReference>
<dbReference type="Gene3D" id="3.30.1360.70">
    <property type="entry name" value="Arginyl tRNA synthetase N-terminal domain"/>
    <property type="match status" value="1"/>
</dbReference>
<dbReference type="Gene3D" id="3.40.50.620">
    <property type="entry name" value="HUPs"/>
    <property type="match status" value="1"/>
</dbReference>
<dbReference type="Gene3D" id="1.10.730.10">
    <property type="entry name" value="Isoleucyl-tRNA Synthetase, Domain 1"/>
    <property type="match status" value="1"/>
</dbReference>
<dbReference type="HAMAP" id="MF_00123">
    <property type="entry name" value="Arg_tRNA_synth"/>
    <property type="match status" value="1"/>
</dbReference>
<dbReference type="InterPro" id="IPR001412">
    <property type="entry name" value="aa-tRNA-synth_I_CS"/>
</dbReference>
<dbReference type="InterPro" id="IPR001278">
    <property type="entry name" value="Arg-tRNA-ligase"/>
</dbReference>
<dbReference type="InterPro" id="IPR005148">
    <property type="entry name" value="Arg-tRNA-synth_N"/>
</dbReference>
<dbReference type="InterPro" id="IPR036695">
    <property type="entry name" value="Arg-tRNA-synth_N_sf"/>
</dbReference>
<dbReference type="InterPro" id="IPR035684">
    <property type="entry name" value="ArgRS_core"/>
</dbReference>
<dbReference type="InterPro" id="IPR008909">
    <property type="entry name" value="DALR_anticod-bd"/>
</dbReference>
<dbReference type="InterPro" id="IPR014729">
    <property type="entry name" value="Rossmann-like_a/b/a_fold"/>
</dbReference>
<dbReference type="InterPro" id="IPR009080">
    <property type="entry name" value="tRNAsynth_Ia_anticodon-bd"/>
</dbReference>
<dbReference type="NCBIfam" id="TIGR00456">
    <property type="entry name" value="argS"/>
    <property type="match status" value="1"/>
</dbReference>
<dbReference type="PANTHER" id="PTHR11956:SF5">
    <property type="entry name" value="ARGININE--TRNA LIGASE, CYTOPLASMIC"/>
    <property type="match status" value="1"/>
</dbReference>
<dbReference type="PANTHER" id="PTHR11956">
    <property type="entry name" value="ARGINYL-TRNA SYNTHETASE"/>
    <property type="match status" value="1"/>
</dbReference>
<dbReference type="Pfam" id="PF03485">
    <property type="entry name" value="Arg_tRNA_synt_N"/>
    <property type="match status" value="1"/>
</dbReference>
<dbReference type="Pfam" id="PF05746">
    <property type="entry name" value="DALR_1"/>
    <property type="match status" value="1"/>
</dbReference>
<dbReference type="Pfam" id="PF00750">
    <property type="entry name" value="tRNA-synt_1d"/>
    <property type="match status" value="1"/>
</dbReference>
<dbReference type="PRINTS" id="PR01038">
    <property type="entry name" value="TRNASYNTHARG"/>
</dbReference>
<dbReference type="SMART" id="SM01016">
    <property type="entry name" value="Arg_tRNA_synt_N"/>
    <property type="match status" value="1"/>
</dbReference>
<dbReference type="SMART" id="SM00836">
    <property type="entry name" value="DALR_1"/>
    <property type="match status" value="1"/>
</dbReference>
<dbReference type="SUPFAM" id="SSF47323">
    <property type="entry name" value="Anticodon-binding domain of a subclass of class I aminoacyl-tRNA synthetases"/>
    <property type="match status" value="1"/>
</dbReference>
<dbReference type="SUPFAM" id="SSF55190">
    <property type="entry name" value="Arginyl-tRNA synthetase (ArgRS), N-terminal 'additional' domain"/>
    <property type="match status" value="1"/>
</dbReference>
<dbReference type="SUPFAM" id="SSF52374">
    <property type="entry name" value="Nucleotidylyl transferase"/>
    <property type="match status" value="1"/>
</dbReference>
<dbReference type="PROSITE" id="PS00178">
    <property type="entry name" value="AA_TRNA_LIGASE_I"/>
    <property type="match status" value="1"/>
</dbReference>
<name>SYR_MYCPA</name>
<feature type="chain" id="PRO_0000242045" description="Arginine--tRNA ligase">
    <location>
        <begin position="1"/>
        <end position="550"/>
    </location>
</feature>
<feature type="short sequence motif" description="'HIGH' region">
    <location>
        <begin position="130"/>
        <end position="140"/>
    </location>
</feature>
<protein>
    <recommendedName>
        <fullName evidence="1">Arginine--tRNA ligase</fullName>
        <ecNumber evidence="1">6.1.1.19</ecNumber>
    </recommendedName>
    <alternativeName>
        <fullName evidence="1">Arginyl-tRNA synthetase</fullName>
        <shortName evidence="1">ArgRS</shortName>
    </alternativeName>
</protein>
<sequence length="550" mass="59469">MTPADLAELLRNTAAAVLAERGLDAAALPATVVVERPRNPEHGDYASNLALQLGKKVGANPRELAGWLAAALAETDGIASAEVAGPGFINLRLEASAQAVVVTNVLDAGDRYGHSDAQSTHNINLEFVSANPTGPIHIGGTRWAAVGDALGRLLSTQGAGVVREYYFNDHGAQIDRFASSLIAAAKGEPTPEDGYAGSYINDIAAQVLRQAPDALSLPEPQLRETFRAIGVDLMFTHIKESLHEFGTDFDVYTHEDSMHTSGRVDQAIARLRETGNIYEKDGATWLRTSAFGDDKDRVVIKSDGKPAYIAGDIAYYLDKRQRGFDLCIYMLGADHHGYIARLKAVAAAFGDDPATVEVLIGQMVNLVRDGQPVRMSKRAGTVITLDDLVEAIGVDAARYSLIRSSVDTPIDIDLALWSSASNENPVYYVQYAHARLSALARNAAELGLIPDTAHLELLSHDKEGTLLRTLGEFPRVLKTAASLREPHRVCRYLEDLAGDYHRFYDSCRVLPQGDEQPTDLHTARLALCQATRQVIANGLAILGVTAPERM</sequence>
<evidence type="ECO:0000255" key="1">
    <source>
        <dbReference type="HAMAP-Rule" id="MF_00123"/>
    </source>
</evidence>
<gene>
    <name evidence="1" type="primary">argS</name>
    <name type="ordered locus">MAP_2470c</name>
</gene>
<comment type="catalytic activity">
    <reaction evidence="1">
        <text>tRNA(Arg) + L-arginine + ATP = L-arginyl-tRNA(Arg) + AMP + diphosphate</text>
        <dbReference type="Rhea" id="RHEA:20301"/>
        <dbReference type="Rhea" id="RHEA-COMP:9658"/>
        <dbReference type="Rhea" id="RHEA-COMP:9673"/>
        <dbReference type="ChEBI" id="CHEBI:30616"/>
        <dbReference type="ChEBI" id="CHEBI:32682"/>
        <dbReference type="ChEBI" id="CHEBI:33019"/>
        <dbReference type="ChEBI" id="CHEBI:78442"/>
        <dbReference type="ChEBI" id="CHEBI:78513"/>
        <dbReference type="ChEBI" id="CHEBI:456215"/>
        <dbReference type="EC" id="6.1.1.19"/>
    </reaction>
</comment>
<comment type="subunit">
    <text evidence="1">Monomer.</text>
</comment>
<comment type="subcellular location">
    <subcellularLocation>
        <location evidence="1">Cytoplasm</location>
    </subcellularLocation>
</comment>
<comment type="similarity">
    <text evidence="1">Belongs to the class-I aminoacyl-tRNA synthetase family.</text>
</comment>
<reference key="1">
    <citation type="journal article" date="2005" name="Proc. Natl. Acad. Sci. U.S.A.">
        <title>The complete genome sequence of Mycobacterium avium subspecies paratuberculosis.</title>
        <authorList>
            <person name="Li L."/>
            <person name="Bannantine J.P."/>
            <person name="Zhang Q."/>
            <person name="Amonsin A."/>
            <person name="May B.J."/>
            <person name="Alt D."/>
            <person name="Banerji N."/>
            <person name="Kanjilal S."/>
            <person name="Kapur V."/>
        </authorList>
    </citation>
    <scope>NUCLEOTIDE SEQUENCE [LARGE SCALE GENOMIC DNA]</scope>
    <source>
        <strain>ATCC BAA-968 / K-10</strain>
    </source>
</reference>